<feature type="chain" id="PRO_0000383776" description="Structure-specific endonuclease subunit slx1">
    <location>
        <begin position="1"/>
        <end position="406"/>
    </location>
</feature>
<feature type="domain" description="GIY-YIG" evidence="1">
    <location>
        <begin position="14"/>
        <end position="97"/>
    </location>
</feature>
<feature type="zinc finger region" description="SLX1-type" evidence="1">
    <location>
        <begin position="225"/>
        <end position="280"/>
    </location>
</feature>
<feature type="region of interest" description="Disordered" evidence="2">
    <location>
        <begin position="32"/>
        <end position="57"/>
    </location>
</feature>
<feature type="region of interest" description="Disordered" evidence="2">
    <location>
        <begin position="93"/>
        <end position="122"/>
    </location>
</feature>
<feature type="region of interest" description="Disordered" evidence="2">
    <location>
        <begin position="341"/>
        <end position="361"/>
    </location>
</feature>
<feature type="compositionally biased region" description="Basic and acidic residues" evidence="2">
    <location>
        <begin position="98"/>
        <end position="113"/>
    </location>
</feature>
<accession>Q2UA42</accession>
<evidence type="ECO:0000255" key="1">
    <source>
        <dbReference type="HAMAP-Rule" id="MF_03100"/>
    </source>
</evidence>
<evidence type="ECO:0000256" key="2">
    <source>
        <dbReference type="SAM" id="MobiDB-lite"/>
    </source>
</evidence>
<sequence length="406" mass="45934">MANVDDVHTKPIPAFYCCYLLRSTVRQTSLYIGSTPHPSRRLAQHNGVSRGGARKTANDKRPWEMVLIVEGFMSRTAALQFDTIYTTWAWQKPGKSRHLGDDDNTESAREKGKTRPRGPARSLKGHLENLHALLRSTYFSGLPLRVRFFADDVHQLWRVWSDRIDGFIPEHIKVIPDGSCFENRQPGIEYLRVGSVEHIQVDYSKIHSYLEKTTFQLDDPEDLQCKVCQAPVVPKEELVLVCPQTRCYCVSHLLCLSARFLDSTKDRGRLIPISGKCPGCHKTIQWSLMMQELSFRTRGAKELQAILRKKKRGDCRVKDVPEKDTDDVGTVTAECCDFPESVGGSIEGPGDASDESTHDDVRLDDDWYESLGIESDHEIADWSESHPAMPTRVEIVIEDSDCDNTG</sequence>
<dbReference type="EC" id="3.1.-.-" evidence="1"/>
<dbReference type="EMBL" id="BA000052">
    <property type="protein sequence ID" value="BAE61573.1"/>
    <property type="molecule type" value="Genomic_DNA"/>
</dbReference>
<dbReference type="SMR" id="Q2UA42"/>
<dbReference type="STRING" id="510516.Q2UA42"/>
<dbReference type="EnsemblFungi" id="BAE61573">
    <property type="protein sequence ID" value="BAE61573"/>
    <property type="gene ID" value="AO090102000554"/>
</dbReference>
<dbReference type="HOGENOM" id="CLU_030739_1_0_1"/>
<dbReference type="OMA" id="HNRGCDF"/>
<dbReference type="Proteomes" id="UP000006564">
    <property type="component" value="Chromosome 4"/>
</dbReference>
<dbReference type="GO" id="GO:0033557">
    <property type="term" value="C:Slx1-Slx4 complex"/>
    <property type="evidence" value="ECO:0007669"/>
    <property type="project" value="UniProtKB-UniRule"/>
</dbReference>
<dbReference type="GO" id="GO:0017108">
    <property type="term" value="F:5'-flap endonuclease activity"/>
    <property type="evidence" value="ECO:0007669"/>
    <property type="project" value="InterPro"/>
</dbReference>
<dbReference type="GO" id="GO:0008821">
    <property type="term" value="F:crossover junction DNA endonuclease activity"/>
    <property type="evidence" value="ECO:0007669"/>
    <property type="project" value="TreeGrafter"/>
</dbReference>
<dbReference type="GO" id="GO:0008270">
    <property type="term" value="F:zinc ion binding"/>
    <property type="evidence" value="ECO:0007669"/>
    <property type="project" value="UniProtKB-KW"/>
</dbReference>
<dbReference type="GO" id="GO:0000724">
    <property type="term" value="P:double-strand break repair via homologous recombination"/>
    <property type="evidence" value="ECO:0007669"/>
    <property type="project" value="TreeGrafter"/>
</dbReference>
<dbReference type="CDD" id="cd10455">
    <property type="entry name" value="GIY-YIG_SLX1"/>
    <property type="match status" value="1"/>
</dbReference>
<dbReference type="Gene3D" id="3.40.1440.10">
    <property type="entry name" value="GIY-YIG endonuclease"/>
    <property type="match status" value="1"/>
</dbReference>
<dbReference type="Gene3D" id="3.30.40.10">
    <property type="entry name" value="Zinc/RING finger domain, C3HC4 (zinc finger)"/>
    <property type="match status" value="1"/>
</dbReference>
<dbReference type="HAMAP" id="MF_03100">
    <property type="entry name" value="Endonuc_su_Slx1"/>
    <property type="match status" value="1"/>
</dbReference>
<dbReference type="InterPro" id="IPR000305">
    <property type="entry name" value="GIY-YIG_endonuc"/>
</dbReference>
<dbReference type="InterPro" id="IPR035901">
    <property type="entry name" value="GIY-YIG_endonuc_sf"/>
</dbReference>
<dbReference type="InterPro" id="IPR027520">
    <property type="entry name" value="Slx1"/>
</dbReference>
<dbReference type="InterPro" id="IPR048749">
    <property type="entry name" value="SLX1_C"/>
</dbReference>
<dbReference type="InterPro" id="IPR050381">
    <property type="entry name" value="SLX1_endonuclease"/>
</dbReference>
<dbReference type="InterPro" id="IPR013083">
    <property type="entry name" value="Znf_RING/FYVE/PHD"/>
</dbReference>
<dbReference type="PANTHER" id="PTHR20208">
    <property type="entry name" value="STRUCTURE-SPECIFIC ENDONUCLEASE SUBUNIT SLX1"/>
    <property type="match status" value="1"/>
</dbReference>
<dbReference type="PANTHER" id="PTHR20208:SF10">
    <property type="entry name" value="STRUCTURE-SPECIFIC ENDONUCLEASE SUBUNIT SLX1"/>
    <property type="match status" value="1"/>
</dbReference>
<dbReference type="Pfam" id="PF01541">
    <property type="entry name" value="GIY-YIG"/>
    <property type="match status" value="1"/>
</dbReference>
<dbReference type="Pfam" id="PF21202">
    <property type="entry name" value="SLX1_C"/>
    <property type="match status" value="1"/>
</dbReference>
<dbReference type="SUPFAM" id="SSF82771">
    <property type="entry name" value="GIY-YIG endonuclease"/>
    <property type="match status" value="1"/>
</dbReference>
<dbReference type="PROSITE" id="PS50164">
    <property type="entry name" value="GIY_YIG"/>
    <property type="match status" value="1"/>
</dbReference>
<proteinExistence type="inferred from homology"/>
<organism>
    <name type="scientific">Aspergillus oryzae (strain ATCC 42149 / RIB 40)</name>
    <name type="common">Yellow koji mold</name>
    <dbReference type="NCBI Taxonomy" id="510516"/>
    <lineage>
        <taxon>Eukaryota</taxon>
        <taxon>Fungi</taxon>
        <taxon>Dikarya</taxon>
        <taxon>Ascomycota</taxon>
        <taxon>Pezizomycotina</taxon>
        <taxon>Eurotiomycetes</taxon>
        <taxon>Eurotiomycetidae</taxon>
        <taxon>Eurotiales</taxon>
        <taxon>Aspergillaceae</taxon>
        <taxon>Aspergillus</taxon>
        <taxon>Aspergillus subgen. Circumdati</taxon>
    </lineage>
</organism>
<reference key="1">
    <citation type="journal article" date="2005" name="Nature">
        <title>Genome sequencing and analysis of Aspergillus oryzae.</title>
        <authorList>
            <person name="Machida M."/>
            <person name="Asai K."/>
            <person name="Sano M."/>
            <person name="Tanaka T."/>
            <person name="Kumagai T."/>
            <person name="Terai G."/>
            <person name="Kusumoto K."/>
            <person name="Arima T."/>
            <person name="Akita O."/>
            <person name="Kashiwagi Y."/>
            <person name="Abe K."/>
            <person name="Gomi K."/>
            <person name="Horiuchi H."/>
            <person name="Kitamoto K."/>
            <person name="Kobayashi T."/>
            <person name="Takeuchi M."/>
            <person name="Denning D.W."/>
            <person name="Galagan J.E."/>
            <person name="Nierman W.C."/>
            <person name="Yu J."/>
            <person name="Archer D.B."/>
            <person name="Bennett J.W."/>
            <person name="Bhatnagar D."/>
            <person name="Cleveland T.E."/>
            <person name="Fedorova N.D."/>
            <person name="Gotoh O."/>
            <person name="Horikawa H."/>
            <person name="Hosoyama A."/>
            <person name="Ichinomiya M."/>
            <person name="Igarashi R."/>
            <person name="Iwashita K."/>
            <person name="Juvvadi P.R."/>
            <person name="Kato M."/>
            <person name="Kato Y."/>
            <person name="Kin T."/>
            <person name="Kokubun A."/>
            <person name="Maeda H."/>
            <person name="Maeyama N."/>
            <person name="Maruyama J."/>
            <person name="Nagasaki H."/>
            <person name="Nakajima T."/>
            <person name="Oda K."/>
            <person name="Okada K."/>
            <person name="Paulsen I."/>
            <person name="Sakamoto K."/>
            <person name="Sawano T."/>
            <person name="Takahashi M."/>
            <person name="Takase K."/>
            <person name="Terabayashi Y."/>
            <person name="Wortman J.R."/>
            <person name="Yamada O."/>
            <person name="Yamagata Y."/>
            <person name="Anazawa H."/>
            <person name="Hata Y."/>
            <person name="Koide Y."/>
            <person name="Komori T."/>
            <person name="Koyama Y."/>
            <person name="Minetoki T."/>
            <person name="Suharnan S."/>
            <person name="Tanaka A."/>
            <person name="Isono K."/>
            <person name="Kuhara S."/>
            <person name="Ogasawara N."/>
            <person name="Kikuchi H."/>
        </authorList>
    </citation>
    <scope>NUCLEOTIDE SEQUENCE [LARGE SCALE GENOMIC DNA]</scope>
    <source>
        <strain>ATCC 42149 / RIB 40</strain>
    </source>
</reference>
<protein>
    <recommendedName>
        <fullName evidence="1">Structure-specific endonuclease subunit slx1</fullName>
        <ecNumber evidence="1">3.1.-.-</ecNumber>
    </recommendedName>
</protein>
<name>SLX1_ASPOR</name>
<keyword id="KW-0227">DNA damage</keyword>
<keyword id="KW-0233">DNA recombination</keyword>
<keyword id="KW-0234">DNA repair</keyword>
<keyword id="KW-0255">Endonuclease</keyword>
<keyword id="KW-0378">Hydrolase</keyword>
<keyword id="KW-0479">Metal-binding</keyword>
<keyword id="KW-0540">Nuclease</keyword>
<keyword id="KW-0539">Nucleus</keyword>
<keyword id="KW-1185">Reference proteome</keyword>
<keyword id="KW-0862">Zinc</keyword>
<keyword id="KW-0863">Zinc-finger</keyword>
<gene>
    <name type="primary">slx1</name>
    <name type="ORF">AO090102000554</name>
</gene>
<comment type="function">
    <text evidence="1">Catalytic subunit of the slx1-slx4 structure-specific endonuclease that resolves DNA secondary structures generated during DNA repair and recombination. Has endonuclease activity towards branched DNA substrates, introducing single-strand cuts in duplex DNA close to junctions with ss-DNA.</text>
</comment>
<comment type="cofactor">
    <cofactor evidence="1">
        <name>a divalent metal cation</name>
        <dbReference type="ChEBI" id="CHEBI:60240"/>
    </cofactor>
</comment>
<comment type="subunit">
    <text evidence="1">Forms a heterodimer with slx4.</text>
</comment>
<comment type="subcellular location">
    <subcellularLocation>
        <location evidence="1">Nucleus</location>
    </subcellularLocation>
</comment>
<comment type="similarity">
    <text evidence="1">Belongs to the SLX1 family.</text>
</comment>